<accession>P0DSM7</accession>
<accession>O97144</accession>
<accession>Q9UB83</accession>
<dbReference type="EMBL" id="AF106961">
    <property type="protein sequence ID" value="AAD19606.1"/>
    <property type="molecule type" value="mRNA"/>
</dbReference>
<dbReference type="SMR" id="P0DSM7"/>
<dbReference type="GO" id="GO:0042803">
    <property type="term" value="F:protein homodimerization activity"/>
    <property type="evidence" value="ECO:0000250"/>
    <property type="project" value="UniProtKB"/>
</dbReference>
<dbReference type="GO" id="GO:0006937">
    <property type="term" value="P:regulation of muscle contraction"/>
    <property type="evidence" value="ECO:0000250"/>
    <property type="project" value="UniProtKB"/>
</dbReference>
<dbReference type="FunFam" id="1.20.5.170:FF:000005">
    <property type="entry name" value="Tropomyosin alpha-1 chain"/>
    <property type="match status" value="1"/>
</dbReference>
<dbReference type="FunFam" id="1.20.5.170:FF:000001">
    <property type="entry name" value="Tropomyosin alpha-1 chain isoform 1"/>
    <property type="match status" value="1"/>
</dbReference>
<dbReference type="FunFam" id="1.20.5.340:FF:000001">
    <property type="entry name" value="Tropomyosin alpha-1 chain isoform 2"/>
    <property type="match status" value="1"/>
</dbReference>
<dbReference type="Gene3D" id="1.20.5.170">
    <property type="match status" value="2"/>
</dbReference>
<dbReference type="Gene3D" id="1.20.5.340">
    <property type="match status" value="1"/>
</dbReference>
<dbReference type="InterPro" id="IPR000533">
    <property type="entry name" value="Tropomyosin"/>
</dbReference>
<dbReference type="PANTHER" id="PTHR19269">
    <property type="entry name" value="TROPOMYOSIN"/>
    <property type="match status" value="1"/>
</dbReference>
<dbReference type="Pfam" id="PF00261">
    <property type="entry name" value="Tropomyosin"/>
    <property type="match status" value="1"/>
</dbReference>
<dbReference type="PRINTS" id="PR00194">
    <property type="entry name" value="TROPOMYOSIN"/>
</dbReference>
<dbReference type="SUPFAM" id="SSF57997">
    <property type="entry name" value="Tropomyosin"/>
    <property type="match status" value="1"/>
</dbReference>
<dbReference type="PROSITE" id="PS00326">
    <property type="entry name" value="TROPOMYOSIN"/>
    <property type="match status" value="1"/>
</dbReference>
<reference key="1">
    <citation type="journal article" date="1999" name="J. Allergy Clin. Immunol.">
        <title>Cockroach allergens and asthma in Brazil: identification of tropomyosin as a major allergen with potential cross-reactivity with mite and shrimp allergens.</title>
        <authorList>
            <person name="Santos A.B."/>
            <person name="Chapman M.D."/>
            <person name="Aalberse R.C."/>
            <person name="Vailes L.D."/>
            <person name="Ferriani V.P."/>
            <person name="Oliver C."/>
            <person name="Rizzo M.C."/>
            <person name="Naspitz C.K."/>
            <person name="Arruda L.K."/>
        </authorList>
    </citation>
    <scope>NUCLEOTIDE SEQUENCE [MRNA]</scope>
    <scope>TISSUE SPECIFICITY</scope>
    <scope>ALLERGEN</scope>
</reference>
<proteinExistence type="evidence at protein level"/>
<sequence>MDAIKKKMQAMKLEKDNAMDRALLCEQQARDANLRAEKAEEEARSLQKKIQQIENDLDQTMEQLMQVNAKLDEKDKALQNAESEVAALNRRIQLLEEDLERSEERLATATAKLAEASQAADESERARKILESKGLADEERMDALENQLKEARFMAEEADKKYDEVARKLAMVEADLERAEERAESGESKIVELEEELRVVGNNLKSLEVSEEKANLREEEYKQQIKTLTTRLKEAEARAEFAERSVQKLQKEVDRLEDELVHEKEKYKFICDDLDMTFTELIGI</sequence>
<name>TPM02_PERAM</name>
<keyword id="KW-0020">Allergen</keyword>
<keyword id="KW-0175">Coiled coil</keyword>
<keyword id="KW-0514">Muscle protein</keyword>
<keyword id="KW-0677">Repeat</keyword>
<comment type="function">
    <text evidence="2">Tropomyosin, in association with the troponin complex, plays a central role in the calcium dependent regulation of muscle contraction.</text>
</comment>
<comment type="subunit">
    <text evidence="1">Homodimer.</text>
</comment>
<comment type="tissue specificity">
    <text evidence="4">Expressed in striated skeletal muscle (at protein level).</text>
</comment>
<comment type="domain">
    <text evidence="6">The molecule is in a coiled coil structure that is formed by 2 polypeptide chains. The sequence exhibits a prominent seven-residues periodicity.</text>
</comment>
<comment type="allergen">
    <text evidence="4">Causes an allergic reaction in human. Binds to IgE in 50% of 53 cockroach-allergic patients living in Brazil.</text>
</comment>
<comment type="similarity">
    <text evidence="6">Belongs to the tropomyosin family.</text>
</comment>
<feature type="chain" id="PRO_0000447186" description="Tropomyosin Per a 7.0102">
    <location>
        <begin position="1"/>
        <end position="284"/>
    </location>
</feature>
<feature type="coiled-coil region" evidence="3">
    <location>
        <begin position="1"/>
        <end position="266"/>
    </location>
</feature>
<evidence type="ECO:0000250" key="1">
    <source>
        <dbReference type="UniProtKB" id="P40414"/>
    </source>
</evidence>
<evidence type="ECO:0000250" key="2">
    <source>
        <dbReference type="UniProtKB" id="Q22866"/>
    </source>
</evidence>
<evidence type="ECO:0000255" key="3"/>
<evidence type="ECO:0000269" key="4">
    <source>
    </source>
</evidence>
<evidence type="ECO:0000303" key="5">
    <source>
    </source>
</evidence>
<evidence type="ECO:0000305" key="6"/>
<organism>
    <name type="scientific">Periplaneta americana</name>
    <name type="common">American cockroach</name>
    <name type="synonym">Blatta americana</name>
    <dbReference type="NCBI Taxonomy" id="6978"/>
    <lineage>
        <taxon>Eukaryota</taxon>
        <taxon>Metazoa</taxon>
        <taxon>Ecdysozoa</taxon>
        <taxon>Arthropoda</taxon>
        <taxon>Hexapoda</taxon>
        <taxon>Insecta</taxon>
        <taxon>Pterygota</taxon>
        <taxon>Neoptera</taxon>
        <taxon>Polyneoptera</taxon>
        <taxon>Dictyoptera</taxon>
        <taxon>Blattodea</taxon>
        <taxon>Blattoidea</taxon>
        <taxon>Blattidae</taxon>
        <taxon>Blattinae</taxon>
        <taxon>Periplaneta</taxon>
    </lineage>
</organism>
<protein>
    <recommendedName>
        <fullName evidence="6">Tropomyosin Per a 7.0102</fullName>
    </recommendedName>
    <alternativeName>
        <fullName evidence="5">Major allergen Per a 7</fullName>
    </alternativeName>
    <allergenName evidence="6">Per a 7.0102</allergenName>
</protein>